<sequence length="96" mass="10572">MKQFYSVVLTIIIYISSQSNVVSLDCRKLNEDCSKTVFSPCCDPLSCALSTAFNGKCKACLAGGYFCWRSDECCSGTCSWLKCTNPLTDIINKLTD</sequence>
<accession>Q5BQX9</accession>
<name>SJ766_SCHJA</name>
<feature type="signal peptide" evidence="1">
    <location>
        <begin position="1"/>
        <end position="23"/>
    </location>
</feature>
<feature type="chain" id="PRO_0000311401" description="Uncharacterized protein SJCHGC09766">
    <location>
        <begin position="24"/>
        <end position="96"/>
    </location>
</feature>
<feature type="disulfide bond" evidence="2">
    <location>
        <begin position="60"/>
        <end position="74"/>
    </location>
</feature>
<feature type="disulfide bond" evidence="2">
    <location>
        <begin position="67"/>
        <end position="78"/>
    </location>
</feature>
<feature type="disulfide bond" evidence="2">
    <location>
        <begin position="73"/>
        <end position="83"/>
    </location>
</feature>
<proteinExistence type="inferred from homology"/>
<protein>
    <recommendedName>
        <fullName>Uncharacterized protein SJCHGC09766</fullName>
    </recommendedName>
</protein>
<reference key="1">
    <citation type="journal article" date="2006" name="PLoS Pathog.">
        <title>New perspectives on host-parasite interplay by comparative transcriptomic and proteomic analyses of Schistosoma japonicum.</title>
        <authorList>
            <person name="Liu F."/>
            <person name="Lu J."/>
            <person name="Hu W."/>
            <person name="Wang S.-Y."/>
            <person name="Cui S.-J."/>
            <person name="Chi M."/>
            <person name="Yan Q."/>
            <person name="Wang X.-R."/>
            <person name="Song H.-D."/>
            <person name="Xu X.-N."/>
            <person name="Wang J.-J."/>
            <person name="Zhang X.-L."/>
            <person name="Zhang X."/>
            <person name="Wang Z.-Q."/>
            <person name="Xue C.-L."/>
            <person name="Brindley P.J."/>
            <person name="McManus D.P."/>
            <person name="Yang P.-Y."/>
            <person name="Feng Z."/>
            <person name="Chen Z."/>
            <person name="Han Z.-G."/>
        </authorList>
    </citation>
    <scope>NUCLEOTIDE SEQUENCE [LARGE SCALE MRNA]</scope>
</reference>
<organism>
    <name type="scientific">Schistosoma japonicum</name>
    <name type="common">Blood fluke</name>
    <dbReference type="NCBI Taxonomy" id="6182"/>
    <lineage>
        <taxon>Eukaryota</taxon>
        <taxon>Metazoa</taxon>
        <taxon>Spiralia</taxon>
        <taxon>Lophotrochozoa</taxon>
        <taxon>Platyhelminthes</taxon>
        <taxon>Trematoda</taxon>
        <taxon>Digenea</taxon>
        <taxon>Strigeidida</taxon>
        <taxon>Schistosomatoidea</taxon>
        <taxon>Schistosomatidae</taxon>
        <taxon>Schistosoma</taxon>
    </lineage>
</organism>
<dbReference type="EMBL" id="AY915836">
    <property type="protein sequence ID" value="AAX31057.1"/>
    <property type="molecule type" value="mRNA"/>
</dbReference>
<dbReference type="SMR" id="Q5BQX9"/>
<dbReference type="OrthoDB" id="6240294at2759"/>
<dbReference type="GO" id="GO:0005576">
    <property type="term" value="C:extracellular region"/>
    <property type="evidence" value="ECO:0007669"/>
    <property type="project" value="UniProtKB-SubCell"/>
</dbReference>
<dbReference type="InterPro" id="IPR021712">
    <property type="entry name" value="UPF0506"/>
</dbReference>
<dbReference type="Pfam" id="PF11703">
    <property type="entry name" value="UPF0506"/>
    <property type="match status" value="1"/>
</dbReference>
<keyword id="KW-1015">Disulfide bond</keyword>
<keyword id="KW-0960">Knottin</keyword>
<keyword id="KW-0964">Secreted</keyword>
<keyword id="KW-0732">Signal</keyword>
<comment type="subcellular location">
    <subcellularLocation>
        <location evidence="2">Secreted</location>
    </subcellularLocation>
</comment>
<comment type="domain">
    <text evidence="2">The presence of a 'disulfide through disulfide knot' structurally defines this protein as a knottin.</text>
</comment>
<evidence type="ECO:0000255" key="1"/>
<evidence type="ECO:0000305" key="2"/>
<gene>
    <name type="ORF">SJCHGC09766</name>
</gene>